<reference key="1">
    <citation type="journal article" date="2007" name="PLoS Genet.">
        <title>The complete genome sequence of Yersinia pseudotuberculosis IP31758, the causative agent of Far East scarlet-like fever.</title>
        <authorList>
            <person name="Eppinger M."/>
            <person name="Rosovitz M.J."/>
            <person name="Fricke W.F."/>
            <person name="Rasko D.A."/>
            <person name="Kokorina G."/>
            <person name="Fayolle C."/>
            <person name="Lindler L.E."/>
            <person name="Carniel E."/>
            <person name="Ravel J."/>
        </authorList>
    </citation>
    <scope>NUCLEOTIDE SEQUENCE [LARGE SCALE GENOMIC DNA]</scope>
    <source>
        <strain>IP 31758</strain>
    </source>
</reference>
<proteinExistence type="inferred from homology"/>
<feature type="chain" id="PRO_1000070619" description="Xanthine-guanine phosphoribosyltransferase">
    <location>
        <begin position="1"/>
        <end position="152"/>
    </location>
</feature>
<feature type="binding site" evidence="1">
    <location>
        <begin position="37"/>
        <end position="38"/>
    </location>
    <ligand>
        <name>5-phospho-alpha-D-ribose 1-diphosphate</name>
        <dbReference type="ChEBI" id="CHEBI:58017"/>
    </ligand>
</feature>
<feature type="binding site" evidence="1">
    <location>
        <position position="69"/>
    </location>
    <ligand>
        <name>5-phospho-alpha-D-ribose 1-diphosphate</name>
        <dbReference type="ChEBI" id="CHEBI:58017"/>
    </ligand>
</feature>
<feature type="binding site" evidence="1">
    <location>
        <position position="69"/>
    </location>
    <ligand>
        <name>GMP</name>
        <dbReference type="ChEBI" id="CHEBI:58115"/>
    </ligand>
</feature>
<feature type="binding site" evidence="1">
    <location>
        <begin position="88"/>
        <end position="96"/>
    </location>
    <ligand>
        <name>5-phospho-alpha-D-ribose 1-diphosphate</name>
        <dbReference type="ChEBI" id="CHEBI:58017"/>
    </ligand>
</feature>
<feature type="binding site" evidence="1">
    <location>
        <position position="89"/>
    </location>
    <ligand>
        <name>Mg(2+)</name>
        <dbReference type="ChEBI" id="CHEBI:18420"/>
    </ligand>
</feature>
<feature type="binding site" evidence="1">
    <location>
        <begin position="92"/>
        <end position="96"/>
    </location>
    <ligand>
        <name>GMP</name>
        <dbReference type="ChEBI" id="CHEBI:58115"/>
    </ligand>
</feature>
<feature type="binding site" evidence="1">
    <location>
        <position position="92"/>
    </location>
    <ligand>
        <name>guanine</name>
        <dbReference type="ChEBI" id="CHEBI:16235"/>
    </ligand>
</feature>
<feature type="binding site" evidence="1">
    <location>
        <position position="92"/>
    </location>
    <ligand>
        <name>xanthine</name>
        <dbReference type="ChEBI" id="CHEBI:17712"/>
    </ligand>
</feature>
<feature type="binding site" evidence="1">
    <location>
        <begin position="134"/>
        <end position="135"/>
    </location>
    <ligand>
        <name>GMP</name>
        <dbReference type="ChEBI" id="CHEBI:58115"/>
    </ligand>
</feature>
<feature type="binding site" evidence="1">
    <location>
        <position position="135"/>
    </location>
    <ligand>
        <name>guanine</name>
        <dbReference type="ChEBI" id="CHEBI:16235"/>
    </ligand>
</feature>
<feature type="binding site" evidence="1">
    <location>
        <position position="135"/>
    </location>
    <ligand>
        <name>xanthine</name>
        <dbReference type="ChEBI" id="CHEBI:17712"/>
    </ligand>
</feature>
<accession>A7FLI5</accession>
<sequence>MNEKYVVTWDMLQIHARKLAQRLLPAEQWKGIIAVSRGGLVPAGILARELGIRYVDTVCISSYDHDNQRDLKVLKRAEGDGEGFIVIDDLVDTGGTATAIREMYPKAHFVTIFAKPAGRPLVDDYVVDIPQNTWIEQPWDMAVTFVAPLSGK</sequence>
<organism>
    <name type="scientific">Yersinia pseudotuberculosis serotype O:1b (strain IP 31758)</name>
    <dbReference type="NCBI Taxonomy" id="349747"/>
    <lineage>
        <taxon>Bacteria</taxon>
        <taxon>Pseudomonadati</taxon>
        <taxon>Pseudomonadota</taxon>
        <taxon>Gammaproteobacteria</taxon>
        <taxon>Enterobacterales</taxon>
        <taxon>Yersiniaceae</taxon>
        <taxon>Yersinia</taxon>
    </lineage>
</organism>
<comment type="function">
    <text evidence="1">Purine salvage pathway enzyme that catalyzes the transfer of the ribosyl-5-phosphate group from 5-phospho-alpha-D-ribose 1-diphosphate (PRPP) to the N9 position of the 6-oxopurines guanine and xanthine to form the corresponding ribonucleotides GMP (guanosine 5'-monophosphate) and XMP (xanthosine 5'-monophosphate), with the release of PPi. To a lesser extent, also acts on hypoxanthine.</text>
</comment>
<comment type="catalytic activity">
    <reaction evidence="1">
        <text>GMP + diphosphate = guanine + 5-phospho-alpha-D-ribose 1-diphosphate</text>
        <dbReference type="Rhea" id="RHEA:25424"/>
        <dbReference type="ChEBI" id="CHEBI:16235"/>
        <dbReference type="ChEBI" id="CHEBI:33019"/>
        <dbReference type="ChEBI" id="CHEBI:58017"/>
        <dbReference type="ChEBI" id="CHEBI:58115"/>
    </reaction>
    <physiologicalReaction direction="right-to-left" evidence="1">
        <dbReference type="Rhea" id="RHEA:25426"/>
    </physiologicalReaction>
</comment>
<comment type="catalytic activity">
    <reaction evidence="1">
        <text>XMP + diphosphate = xanthine + 5-phospho-alpha-D-ribose 1-diphosphate</text>
        <dbReference type="Rhea" id="RHEA:10800"/>
        <dbReference type="ChEBI" id="CHEBI:17712"/>
        <dbReference type="ChEBI" id="CHEBI:33019"/>
        <dbReference type="ChEBI" id="CHEBI:57464"/>
        <dbReference type="ChEBI" id="CHEBI:58017"/>
        <dbReference type="EC" id="2.4.2.22"/>
    </reaction>
    <physiologicalReaction direction="right-to-left" evidence="1">
        <dbReference type="Rhea" id="RHEA:10802"/>
    </physiologicalReaction>
</comment>
<comment type="catalytic activity">
    <reaction evidence="1">
        <text>IMP + diphosphate = hypoxanthine + 5-phospho-alpha-D-ribose 1-diphosphate</text>
        <dbReference type="Rhea" id="RHEA:17973"/>
        <dbReference type="ChEBI" id="CHEBI:17368"/>
        <dbReference type="ChEBI" id="CHEBI:33019"/>
        <dbReference type="ChEBI" id="CHEBI:58017"/>
        <dbReference type="ChEBI" id="CHEBI:58053"/>
    </reaction>
    <physiologicalReaction direction="right-to-left" evidence="1">
        <dbReference type="Rhea" id="RHEA:17975"/>
    </physiologicalReaction>
</comment>
<comment type="cofactor">
    <cofactor evidence="1">
        <name>Mg(2+)</name>
        <dbReference type="ChEBI" id="CHEBI:18420"/>
    </cofactor>
</comment>
<comment type="pathway">
    <text evidence="1">Purine metabolism; GMP biosynthesis via salvage pathway; GMP from guanine: step 1/1.</text>
</comment>
<comment type="pathway">
    <text evidence="1">Purine metabolism; XMP biosynthesis via salvage pathway; XMP from xanthine: step 1/1.</text>
</comment>
<comment type="subunit">
    <text evidence="1">Homotetramer.</text>
</comment>
<comment type="subcellular location">
    <subcellularLocation>
        <location evidence="1">Cell inner membrane</location>
        <topology evidence="1">Peripheral membrane protein</topology>
    </subcellularLocation>
</comment>
<comment type="similarity">
    <text evidence="1">Belongs to the purine/pyrimidine phosphoribosyltransferase family. XGPT subfamily.</text>
</comment>
<gene>
    <name evidence="1" type="primary">gpt</name>
    <name type="ordered locus">YpsIP31758_3153</name>
</gene>
<keyword id="KW-0997">Cell inner membrane</keyword>
<keyword id="KW-1003">Cell membrane</keyword>
<keyword id="KW-0328">Glycosyltransferase</keyword>
<keyword id="KW-0460">Magnesium</keyword>
<keyword id="KW-0472">Membrane</keyword>
<keyword id="KW-0479">Metal-binding</keyword>
<keyword id="KW-0660">Purine salvage</keyword>
<keyword id="KW-0808">Transferase</keyword>
<dbReference type="EC" id="2.4.2.-" evidence="1"/>
<dbReference type="EC" id="2.4.2.22" evidence="1"/>
<dbReference type="EMBL" id="CP000720">
    <property type="protein sequence ID" value="ABS47336.1"/>
    <property type="molecule type" value="Genomic_DNA"/>
</dbReference>
<dbReference type="RefSeq" id="WP_002208704.1">
    <property type="nucleotide sequence ID" value="NC_009708.1"/>
</dbReference>
<dbReference type="SMR" id="A7FLI5"/>
<dbReference type="GeneID" id="57975493"/>
<dbReference type="KEGG" id="ypi:YpsIP31758_3153"/>
<dbReference type="HOGENOM" id="CLU_080904_3_0_6"/>
<dbReference type="UniPathway" id="UPA00602">
    <property type="reaction ID" value="UER00658"/>
</dbReference>
<dbReference type="UniPathway" id="UPA00909">
    <property type="reaction ID" value="UER00887"/>
</dbReference>
<dbReference type="Proteomes" id="UP000002412">
    <property type="component" value="Chromosome"/>
</dbReference>
<dbReference type="GO" id="GO:0005829">
    <property type="term" value="C:cytosol"/>
    <property type="evidence" value="ECO:0007669"/>
    <property type="project" value="TreeGrafter"/>
</dbReference>
<dbReference type="GO" id="GO:0005886">
    <property type="term" value="C:plasma membrane"/>
    <property type="evidence" value="ECO:0007669"/>
    <property type="project" value="UniProtKB-SubCell"/>
</dbReference>
<dbReference type="GO" id="GO:0052657">
    <property type="term" value="F:guanine phosphoribosyltransferase activity"/>
    <property type="evidence" value="ECO:0007669"/>
    <property type="project" value="RHEA"/>
</dbReference>
<dbReference type="GO" id="GO:0004422">
    <property type="term" value="F:hypoxanthine phosphoribosyltransferase activity"/>
    <property type="evidence" value="ECO:0007669"/>
    <property type="project" value="TreeGrafter"/>
</dbReference>
<dbReference type="GO" id="GO:0000287">
    <property type="term" value="F:magnesium ion binding"/>
    <property type="evidence" value="ECO:0007669"/>
    <property type="project" value="UniProtKB-UniRule"/>
</dbReference>
<dbReference type="GO" id="GO:0000310">
    <property type="term" value="F:xanthine phosphoribosyltransferase activity"/>
    <property type="evidence" value="ECO:0007669"/>
    <property type="project" value="UniProtKB-UniRule"/>
</dbReference>
<dbReference type="GO" id="GO:0032263">
    <property type="term" value="P:GMP salvage"/>
    <property type="evidence" value="ECO:0007669"/>
    <property type="project" value="UniProtKB-UniRule"/>
</dbReference>
<dbReference type="GO" id="GO:0032264">
    <property type="term" value="P:IMP salvage"/>
    <property type="evidence" value="ECO:0007669"/>
    <property type="project" value="TreeGrafter"/>
</dbReference>
<dbReference type="GO" id="GO:0006166">
    <property type="term" value="P:purine ribonucleoside salvage"/>
    <property type="evidence" value="ECO:0007669"/>
    <property type="project" value="UniProtKB-KW"/>
</dbReference>
<dbReference type="GO" id="GO:0032265">
    <property type="term" value="P:XMP salvage"/>
    <property type="evidence" value="ECO:0007669"/>
    <property type="project" value="UniProtKB-UniRule"/>
</dbReference>
<dbReference type="CDD" id="cd06223">
    <property type="entry name" value="PRTases_typeI"/>
    <property type="match status" value="1"/>
</dbReference>
<dbReference type="FunFam" id="3.40.50.2020:FF:000009">
    <property type="entry name" value="Xanthine phosphoribosyltransferase"/>
    <property type="match status" value="1"/>
</dbReference>
<dbReference type="Gene3D" id="3.40.50.2020">
    <property type="match status" value="1"/>
</dbReference>
<dbReference type="HAMAP" id="MF_01903">
    <property type="entry name" value="XGPRT"/>
    <property type="match status" value="1"/>
</dbReference>
<dbReference type="InterPro" id="IPR000836">
    <property type="entry name" value="PRibTrfase_dom"/>
</dbReference>
<dbReference type="InterPro" id="IPR029057">
    <property type="entry name" value="PRTase-like"/>
</dbReference>
<dbReference type="InterPro" id="IPR023747">
    <property type="entry name" value="Xanthine_Guanine_PRibTrfase"/>
</dbReference>
<dbReference type="NCBIfam" id="NF006613">
    <property type="entry name" value="PRK09177.1"/>
    <property type="match status" value="1"/>
</dbReference>
<dbReference type="PANTHER" id="PTHR39563">
    <property type="entry name" value="XANTHINE PHOSPHORIBOSYLTRANSFERASE"/>
    <property type="match status" value="1"/>
</dbReference>
<dbReference type="PANTHER" id="PTHR39563:SF1">
    <property type="entry name" value="XANTHINE-GUANINE PHOSPHORIBOSYLTRANSFERASE"/>
    <property type="match status" value="1"/>
</dbReference>
<dbReference type="Pfam" id="PF00156">
    <property type="entry name" value="Pribosyltran"/>
    <property type="match status" value="1"/>
</dbReference>
<dbReference type="SUPFAM" id="SSF53271">
    <property type="entry name" value="PRTase-like"/>
    <property type="match status" value="1"/>
</dbReference>
<dbReference type="PROSITE" id="PS00103">
    <property type="entry name" value="PUR_PYR_PR_TRANSFER"/>
    <property type="match status" value="1"/>
</dbReference>
<protein>
    <recommendedName>
        <fullName evidence="1">Xanthine-guanine phosphoribosyltransferase</fullName>
        <shortName evidence="1">XGPRT</shortName>
        <ecNumber evidence="1">2.4.2.-</ecNumber>
        <ecNumber evidence="1">2.4.2.22</ecNumber>
    </recommendedName>
    <alternativeName>
        <fullName evidence="1">Xanthine phosphoribosyltransferase</fullName>
    </alternativeName>
</protein>
<name>XGPT_YERP3</name>
<evidence type="ECO:0000255" key="1">
    <source>
        <dbReference type="HAMAP-Rule" id="MF_01903"/>
    </source>
</evidence>